<name>PSD_ACIBC</name>
<accession>B2I1N9</accession>
<reference key="1">
    <citation type="journal article" date="2008" name="Antimicrob. Agents Chemother.">
        <title>Whole-genome pyrosequencing of an epidemic multidrug-resistant Acinetobacter baumannii strain belonging to the European clone II group.</title>
        <authorList>
            <person name="Iacono M."/>
            <person name="Villa L."/>
            <person name="Fortini D."/>
            <person name="Bordoni R."/>
            <person name="Imperi F."/>
            <person name="Bonnal R.J."/>
            <person name="Sicheritz-Ponten T."/>
            <person name="De Bellis G."/>
            <person name="Visca P."/>
            <person name="Cassone A."/>
            <person name="Carattoli A."/>
        </authorList>
    </citation>
    <scope>NUCLEOTIDE SEQUENCE [LARGE SCALE GENOMIC DNA]</scope>
    <source>
        <strain>ACICU</strain>
    </source>
</reference>
<proteinExistence type="inferred from homology"/>
<dbReference type="EC" id="4.1.1.65" evidence="1"/>
<dbReference type="EMBL" id="CP000863">
    <property type="protein sequence ID" value="ACC58887.1"/>
    <property type="molecule type" value="Genomic_DNA"/>
</dbReference>
<dbReference type="SMR" id="B2I1N9"/>
<dbReference type="KEGG" id="abc:ACICU_03578"/>
<dbReference type="HOGENOM" id="CLU_029061_4_1_6"/>
<dbReference type="UniPathway" id="UPA00558">
    <property type="reaction ID" value="UER00616"/>
</dbReference>
<dbReference type="Proteomes" id="UP000008839">
    <property type="component" value="Chromosome"/>
</dbReference>
<dbReference type="GO" id="GO:0005886">
    <property type="term" value="C:plasma membrane"/>
    <property type="evidence" value="ECO:0007669"/>
    <property type="project" value="UniProtKB-SubCell"/>
</dbReference>
<dbReference type="GO" id="GO:0004609">
    <property type="term" value="F:phosphatidylserine decarboxylase activity"/>
    <property type="evidence" value="ECO:0007669"/>
    <property type="project" value="UniProtKB-UniRule"/>
</dbReference>
<dbReference type="GO" id="GO:0006646">
    <property type="term" value="P:phosphatidylethanolamine biosynthetic process"/>
    <property type="evidence" value="ECO:0007669"/>
    <property type="project" value="UniProtKB-UniRule"/>
</dbReference>
<dbReference type="HAMAP" id="MF_00662">
    <property type="entry name" value="PS_decarb_PSD_B_type1"/>
    <property type="match status" value="1"/>
</dbReference>
<dbReference type="InterPro" id="IPR003817">
    <property type="entry name" value="PS_Dcarbxylase"/>
</dbReference>
<dbReference type="InterPro" id="IPR033177">
    <property type="entry name" value="PSD-B"/>
</dbReference>
<dbReference type="InterPro" id="IPR033178">
    <property type="entry name" value="PSD_type1_pro"/>
</dbReference>
<dbReference type="NCBIfam" id="TIGR00163">
    <property type="entry name" value="PS_decarb"/>
    <property type="match status" value="1"/>
</dbReference>
<dbReference type="PANTHER" id="PTHR10067">
    <property type="entry name" value="PHOSPHATIDYLSERINE DECARBOXYLASE"/>
    <property type="match status" value="1"/>
</dbReference>
<dbReference type="PANTHER" id="PTHR10067:SF6">
    <property type="entry name" value="PHOSPHATIDYLSERINE DECARBOXYLASE PROENZYME, MITOCHONDRIAL"/>
    <property type="match status" value="1"/>
</dbReference>
<dbReference type="Pfam" id="PF02666">
    <property type="entry name" value="PS_Dcarbxylase"/>
    <property type="match status" value="1"/>
</dbReference>
<comment type="function">
    <text evidence="1">Catalyzes the formation of phosphatidylethanolamine (PtdEtn) from phosphatidylserine (PtdSer).</text>
</comment>
<comment type="catalytic activity">
    <reaction evidence="1">
        <text>a 1,2-diacyl-sn-glycero-3-phospho-L-serine + H(+) = a 1,2-diacyl-sn-glycero-3-phosphoethanolamine + CO2</text>
        <dbReference type="Rhea" id="RHEA:20828"/>
        <dbReference type="ChEBI" id="CHEBI:15378"/>
        <dbReference type="ChEBI" id="CHEBI:16526"/>
        <dbReference type="ChEBI" id="CHEBI:57262"/>
        <dbReference type="ChEBI" id="CHEBI:64612"/>
        <dbReference type="EC" id="4.1.1.65"/>
    </reaction>
</comment>
<comment type="cofactor">
    <cofactor evidence="1">
        <name>pyruvate</name>
        <dbReference type="ChEBI" id="CHEBI:15361"/>
    </cofactor>
    <text evidence="1">Binds 1 pyruvoyl group covalently per subunit.</text>
</comment>
<comment type="pathway">
    <text evidence="1">Phospholipid metabolism; phosphatidylethanolamine biosynthesis; phosphatidylethanolamine from CDP-diacylglycerol: step 2/2.</text>
</comment>
<comment type="subunit">
    <text evidence="1">Heterodimer of a large membrane-associated beta subunit and a small pyruvoyl-containing alpha subunit.</text>
</comment>
<comment type="subcellular location">
    <subcellularLocation>
        <location evidence="1">Cell membrane</location>
        <topology evidence="1">Peripheral membrane protein</topology>
    </subcellularLocation>
</comment>
<comment type="PTM">
    <text evidence="1">Is synthesized initially as an inactive proenzyme. Formation of the active enzyme involves a self-maturation process in which the active site pyruvoyl group is generated from an internal serine residue via an autocatalytic post-translational modification. Two non-identical subunits are generated from the proenzyme in this reaction, and the pyruvate is formed at the N-terminus of the alpha chain, which is derived from the carboxyl end of the proenzyme. The autoendoproteolytic cleavage occurs by a canonical serine protease mechanism, in which the side chain hydroxyl group of the serine supplies its oxygen atom to form the C-terminus of the beta chain, while the remainder of the serine residue undergoes an oxidative deamination to produce ammonia and the pyruvoyl prosthetic group on the alpha chain. During this reaction, the Ser that is part of the protease active site of the proenzyme becomes the pyruvoyl prosthetic group, which constitutes an essential element of the active site of the mature decarboxylase.</text>
</comment>
<comment type="similarity">
    <text evidence="1">Belongs to the phosphatidylserine decarboxylase family. PSD-B subfamily. Prokaryotic type I sub-subfamily.</text>
</comment>
<protein>
    <recommendedName>
        <fullName evidence="1">Phosphatidylserine decarboxylase proenzyme</fullName>
        <ecNumber evidence="1">4.1.1.65</ecNumber>
    </recommendedName>
    <component>
        <recommendedName>
            <fullName evidence="1">Phosphatidylserine decarboxylase alpha chain</fullName>
        </recommendedName>
    </component>
    <component>
        <recommendedName>
            <fullName evidence="1">Phosphatidylserine decarboxylase beta chain</fullName>
        </recommendedName>
    </component>
</protein>
<sequence>MSFTSRLKKELFIKAQNLVPQHQLSRVVGKVAASENPILKAAVIHAFKTKYGIDLSIAEQGNALKYKSFNDFFTRALKDGVRLVDENPDSIVSPADGAISQIGKITAGEVFQAKGQSFSVEKLIGDPQLAQPFQEGEFATVYLSPRDYHRVHMPFSGTLTETLYVPGELFSVNQVTAENVPGLFARNERMVCLFDTELGRMAVVLVGAMIVAGIETVATGKVKPSGRIELQHHELKLEKGAELGRFYLGSTAIILFEKDKIEWEKRFKAESVVVMGERMGHTI</sequence>
<feature type="chain" id="PRO_1000131320" description="Phosphatidylserine decarboxylase beta chain" evidence="1">
    <location>
        <begin position="1"/>
        <end position="249"/>
    </location>
</feature>
<feature type="chain" id="PRO_1000131321" description="Phosphatidylserine decarboxylase alpha chain" evidence="1">
    <location>
        <begin position="250"/>
        <end position="283"/>
    </location>
</feature>
<feature type="active site" description="Charge relay system; for autoendoproteolytic cleavage activity" evidence="1">
    <location>
        <position position="96"/>
    </location>
</feature>
<feature type="active site" description="Charge relay system; for autoendoproteolytic cleavage activity" evidence="1">
    <location>
        <position position="152"/>
    </location>
</feature>
<feature type="active site" description="Charge relay system; for autoendoproteolytic cleavage activity" evidence="1">
    <location>
        <position position="250"/>
    </location>
</feature>
<feature type="active site" description="Schiff-base intermediate with substrate; via pyruvic acid; for decarboxylase activity" evidence="1">
    <location>
        <position position="250"/>
    </location>
</feature>
<feature type="site" description="Cleavage (non-hydrolytic); by autocatalysis" evidence="1">
    <location>
        <begin position="249"/>
        <end position="250"/>
    </location>
</feature>
<feature type="modified residue" description="Pyruvic acid (Ser); by autocatalysis" evidence="1">
    <location>
        <position position="250"/>
    </location>
</feature>
<gene>
    <name evidence="1" type="primary">psd</name>
    <name type="ordered locus">ACICU_03578</name>
</gene>
<organism>
    <name type="scientific">Acinetobacter baumannii (strain ACICU)</name>
    <dbReference type="NCBI Taxonomy" id="405416"/>
    <lineage>
        <taxon>Bacteria</taxon>
        <taxon>Pseudomonadati</taxon>
        <taxon>Pseudomonadota</taxon>
        <taxon>Gammaproteobacteria</taxon>
        <taxon>Moraxellales</taxon>
        <taxon>Moraxellaceae</taxon>
        <taxon>Acinetobacter</taxon>
        <taxon>Acinetobacter calcoaceticus/baumannii complex</taxon>
    </lineage>
</organism>
<keyword id="KW-1003">Cell membrane</keyword>
<keyword id="KW-0210">Decarboxylase</keyword>
<keyword id="KW-0444">Lipid biosynthesis</keyword>
<keyword id="KW-0443">Lipid metabolism</keyword>
<keyword id="KW-0456">Lyase</keyword>
<keyword id="KW-0472">Membrane</keyword>
<keyword id="KW-0594">Phospholipid biosynthesis</keyword>
<keyword id="KW-1208">Phospholipid metabolism</keyword>
<keyword id="KW-0670">Pyruvate</keyword>
<keyword id="KW-0865">Zymogen</keyword>
<evidence type="ECO:0000255" key="1">
    <source>
        <dbReference type="HAMAP-Rule" id="MF_00662"/>
    </source>
</evidence>